<organism>
    <name type="scientific">Neisseria gonorrhoeae (strain NCCP11945)</name>
    <dbReference type="NCBI Taxonomy" id="521006"/>
    <lineage>
        <taxon>Bacteria</taxon>
        <taxon>Pseudomonadati</taxon>
        <taxon>Pseudomonadota</taxon>
        <taxon>Betaproteobacteria</taxon>
        <taxon>Neisseriales</taxon>
        <taxon>Neisseriaceae</taxon>
        <taxon>Neisseria</taxon>
    </lineage>
</organism>
<proteinExistence type="inferred from homology"/>
<dbReference type="EMBL" id="CP001050">
    <property type="protein sequence ID" value="ACF28933.1"/>
    <property type="molecule type" value="Genomic_DNA"/>
</dbReference>
<dbReference type="RefSeq" id="WP_002214303.1">
    <property type="nucleotide sequence ID" value="NC_011035.1"/>
</dbReference>
<dbReference type="SMR" id="B4RIX6"/>
<dbReference type="GeneID" id="93386569"/>
<dbReference type="KEGG" id="ngk:NGK_0237"/>
<dbReference type="HOGENOM" id="CLU_086034_5_3_4"/>
<dbReference type="Proteomes" id="UP000002564">
    <property type="component" value="Chromosome"/>
</dbReference>
<dbReference type="GO" id="GO:0033281">
    <property type="term" value="C:TAT protein transport complex"/>
    <property type="evidence" value="ECO:0007669"/>
    <property type="project" value="UniProtKB-UniRule"/>
</dbReference>
<dbReference type="GO" id="GO:0008320">
    <property type="term" value="F:protein transmembrane transporter activity"/>
    <property type="evidence" value="ECO:0007669"/>
    <property type="project" value="UniProtKB-UniRule"/>
</dbReference>
<dbReference type="GO" id="GO:0043953">
    <property type="term" value="P:protein transport by the Tat complex"/>
    <property type="evidence" value="ECO:0007669"/>
    <property type="project" value="UniProtKB-UniRule"/>
</dbReference>
<dbReference type="Gene3D" id="1.20.5.3310">
    <property type="match status" value="1"/>
</dbReference>
<dbReference type="HAMAP" id="MF_00236">
    <property type="entry name" value="TatA_E"/>
    <property type="match status" value="1"/>
</dbReference>
<dbReference type="InterPro" id="IPR003369">
    <property type="entry name" value="TatA/B/E"/>
</dbReference>
<dbReference type="InterPro" id="IPR006312">
    <property type="entry name" value="TatA/E"/>
</dbReference>
<dbReference type="NCBIfam" id="NF002813">
    <property type="entry name" value="PRK02958.1"/>
    <property type="match status" value="1"/>
</dbReference>
<dbReference type="NCBIfam" id="TIGR01411">
    <property type="entry name" value="tatAE"/>
    <property type="match status" value="1"/>
</dbReference>
<dbReference type="PANTHER" id="PTHR42982">
    <property type="entry name" value="SEC-INDEPENDENT PROTEIN TRANSLOCASE PROTEIN TATA"/>
    <property type="match status" value="1"/>
</dbReference>
<dbReference type="PANTHER" id="PTHR42982:SF1">
    <property type="entry name" value="SEC-INDEPENDENT PROTEIN TRANSLOCASE PROTEIN TATA"/>
    <property type="match status" value="1"/>
</dbReference>
<dbReference type="Pfam" id="PF02416">
    <property type="entry name" value="TatA_B_E"/>
    <property type="match status" value="1"/>
</dbReference>
<name>TATA_NEIG2</name>
<keyword id="KW-0997">Cell inner membrane</keyword>
<keyword id="KW-1003">Cell membrane</keyword>
<keyword id="KW-0472">Membrane</keyword>
<keyword id="KW-0653">Protein transport</keyword>
<keyword id="KW-0811">Translocation</keyword>
<keyword id="KW-0812">Transmembrane</keyword>
<keyword id="KW-1133">Transmembrane helix</keyword>
<keyword id="KW-0813">Transport</keyword>
<reference key="1">
    <citation type="journal article" date="2008" name="J. Bacteriol.">
        <title>Complete genome sequence of Neisseria gonorrhoeae NCCP11945.</title>
        <authorList>
            <person name="Chung G.T."/>
            <person name="Yoo J.S."/>
            <person name="Oh H.B."/>
            <person name="Lee Y.S."/>
            <person name="Cha S.H."/>
            <person name="Kim S.J."/>
            <person name="Yoo C.K."/>
        </authorList>
    </citation>
    <scope>NUCLEOTIDE SEQUENCE [LARGE SCALE GENOMIC DNA]</scope>
    <source>
        <strain>NCCP11945</strain>
    </source>
</reference>
<comment type="function">
    <text evidence="1">Part of the twin-arginine translocation (Tat) system that transports large folded proteins containing a characteristic twin-arginine motif in their signal peptide across membranes. TatA could form the protein-conducting channel of the Tat system.</text>
</comment>
<comment type="subunit">
    <text evidence="1">The Tat system comprises two distinct complexes: a TatABC complex, containing multiple copies of TatA, TatB and TatC subunits, and a separate TatA complex, containing only TatA subunits. Substrates initially bind to the TatABC complex, which probably triggers association of the separate TatA complex to form the active translocon.</text>
</comment>
<comment type="subcellular location">
    <subcellularLocation>
        <location evidence="1">Cell inner membrane</location>
        <topology evidence="1">Single-pass membrane protein</topology>
    </subcellularLocation>
</comment>
<comment type="similarity">
    <text evidence="1">Belongs to the TatA/E family.</text>
</comment>
<accession>B4RIX6</accession>
<gene>
    <name evidence="1" type="primary">tatA</name>
    <name type="ordered locus">NGK_0237</name>
</gene>
<protein>
    <recommendedName>
        <fullName evidence="1">Sec-independent protein translocase protein TatA</fullName>
    </recommendedName>
</protein>
<evidence type="ECO:0000255" key="1">
    <source>
        <dbReference type="HAMAP-Rule" id="MF_00236"/>
    </source>
</evidence>
<evidence type="ECO:0000256" key="2">
    <source>
        <dbReference type="SAM" id="MobiDB-lite"/>
    </source>
</evidence>
<feature type="chain" id="PRO_1000197887" description="Sec-independent protein translocase protein TatA">
    <location>
        <begin position="1"/>
        <end position="67"/>
    </location>
</feature>
<feature type="transmembrane region" description="Helical" evidence="1">
    <location>
        <begin position="1"/>
        <end position="21"/>
    </location>
</feature>
<feature type="region of interest" description="Disordered" evidence="2">
    <location>
        <begin position="43"/>
        <end position="67"/>
    </location>
</feature>
<feature type="compositionally biased region" description="Basic and acidic residues" evidence="2">
    <location>
        <begin position="47"/>
        <end position="67"/>
    </location>
</feature>
<sequence>MGSFSLTHWIIVLIIVVLIFGTKKLRNVGKDLGGAVHDFKQGLNEGTDGKEAQKDDVIEHKKDEDKA</sequence>